<dbReference type="EMBL" id="AY825030">
    <property type="protein sequence ID" value="AAV97586.1"/>
    <property type="molecule type" value="Genomic_DNA"/>
</dbReference>
<dbReference type="EMBL" id="DQ336111">
    <property type="protein sequence ID" value="ABC61862.1"/>
    <property type="molecule type" value="mRNA"/>
</dbReference>
<dbReference type="EMBL" id="DQ336112">
    <property type="protein sequence ID" value="ABC61863.1"/>
    <property type="molecule type" value="mRNA"/>
</dbReference>
<dbReference type="EMBL" id="DQ336113">
    <property type="protein sequence ID" value="ABC61864.1"/>
    <property type="molecule type" value="mRNA"/>
</dbReference>
<dbReference type="EMBL" id="DQ336114">
    <property type="protein sequence ID" value="ABC61865.1"/>
    <property type="molecule type" value="mRNA"/>
</dbReference>
<dbReference type="EMBL" id="DQ336115">
    <property type="protein sequence ID" value="ABC61866.1"/>
    <property type="molecule type" value="mRNA"/>
</dbReference>
<dbReference type="EMBL" id="AL080239">
    <property type="protein sequence ID" value="CAI41652.1"/>
    <property type="molecule type" value="Genomic_DNA"/>
</dbReference>
<dbReference type="CCDS" id="CCDS35419.1"/>
<dbReference type="RefSeq" id="NP_001009615.1">
    <property type="nucleotide sequence ID" value="NM_001009615.3"/>
</dbReference>
<dbReference type="BioGRID" id="138938">
    <property type="interactions" value="106"/>
</dbReference>
<dbReference type="FunCoup" id="Q5MJ10">
    <property type="interactions" value="7"/>
</dbReference>
<dbReference type="IntAct" id="Q5MJ10">
    <property type="interactions" value="89"/>
</dbReference>
<dbReference type="STRING" id="9606.ENSP00000470584"/>
<dbReference type="iPTMnet" id="Q5MJ10"/>
<dbReference type="PhosphoSitePlus" id="Q5MJ10"/>
<dbReference type="BioMuta" id="SPANXN2"/>
<dbReference type="DMDM" id="74743052"/>
<dbReference type="MassIVE" id="Q5MJ10"/>
<dbReference type="PaxDb" id="9606-ENSP00000470584"/>
<dbReference type="PeptideAtlas" id="Q5MJ10"/>
<dbReference type="Antibodypedia" id="74059">
    <property type="antibodies" value="2 antibodies from 2 providers"/>
</dbReference>
<dbReference type="DNASU" id="494119"/>
<dbReference type="Ensembl" id="ENST00000598475.2">
    <property type="protein sequence ID" value="ENSP00000470584.1"/>
    <property type="gene ID" value="ENSG00000268988.2"/>
</dbReference>
<dbReference type="GeneID" id="494119"/>
<dbReference type="KEGG" id="hsa:494119"/>
<dbReference type="MANE-Select" id="ENST00000598475.2">
    <property type="protein sequence ID" value="ENSP00000470584.1"/>
    <property type="RefSeq nucleotide sequence ID" value="NM_001009615.3"/>
    <property type="RefSeq protein sequence ID" value="NP_001009615.1"/>
</dbReference>
<dbReference type="UCSC" id="uc033exw.1">
    <property type="organism name" value="human"/>
</dbReference>
<dbReference type="AGR" id="HGNC:33175"/>
<dbReference type="CTD" id="494119"/>
<dbReference type="DisGeNET" id="494119"/>
<dbReference type="GeneCards" id="SPANXN2"/>
<dbReference type="HGNC" id="HGNC:33175">
    <property type="gene designation" value="SPANXN2"/>
</dbReference>
<dbReference type="HPA" id="ENSG00000268988">
    <property type="expression patterns" value="Tissue enriched (testis)"/>
</dbReference>
<dbReference type="MIM" id="300665">
    <property type="type" value="gene"/>
</dbReference>
<dbReference type="neXtProt" id="NX_Q5MJ10"/>
<dbReference type="OpenTargets" id="ENSG00000268988"/>
<dbReference type="PharmGKB" id="PA162404384"/>
<dbReference type="VEuPathDB" id="HostDB:ENSG00000268988"/>
<dbReference type="eggNOG" id="ENOG502RXMW">
    <property type="taxonomic scope" value="Eukaryota"/>
</dbReference>
<dbReference type="GeneTree" id="ENSGT00940000163956"/>
<dbReference type="HOGENOM" id="CLU_140435_0_0_1"/>
<dbReference type="InParanoid" id="Q5MJ10"/>
<dbReference type="OMA" id="IIVHYYR"/>
<dbReference type="OrthoDB" id="9531421at2759"/>
<dbReference type="PAN-GO" id="Q5MJ10">
    <property type="GO annotations" value="0 GO annotations based on evolutionary models"/>
</dbReference>
<dbReference type="PhylomeDB" id="Q5MJ10"/>
<dbReference type="TreeFam" id="TF341404"/>
<dbReference type="PathwayCommons" id="Q5MJ10"/>
<dbReference type="SignaLink" id="Q5MJ10"/>
<dbReference type="BioGRID-ORCS" id="494119">
    <property type="hits" value="25 hits in 661 CRISPR screens"/>
</dbReference>
<dbReference type="GenomeRNAi" id="494119"/>
<dbReference type="Pharos" id="Q5MJ10">
    <property type="development level" value="Tdark"/>
</dbReference>
<dbReference type="PRO" id="PR:Q5MJ10"/>
<dbReference type="Proteomes" id="UP000005640">
    <property type="component" value="Chromosome X"/>
</dbReference>
<dbReference type="RNAct" id="Q5MJ10">
    <property type="molecule type" value="protein"/>
</dbReference>
<dbReference type="Bgee" id="ENSG00000268988">
    <property type="expression patterns" value="Expressed in male germ line stem cell (sensu Vertebrata) in testis and 7 other cell types or tissues"/>
</dbReference>
<dbReference type="InterPro" id="IPR010007">
    <property type="entry name" value="SPAN-X_fam"/>
</dbReference>
<dbReference type="Pfam" id="PF07458">
    <property type="entry name" value="SPAN-X"/>
    <property type="match status" value="1"/>
</dbReference>
<reference key="1">
    <citation type="journal article" date="2004" name="Proc. Natl. Acad. Sci. U.S.A.">
        <title>The SPANX gene family of cancer/testis-specific antigens: rapid evolution and amplification in African great apes and hominids.</title>
        <authorList>
            <person name="Kouprina N."/>
            <person name="Mullokandov M."/>
            <person name="Rogozin I.B."/>
            <person name="Collins N.K."/>
            <person name="Solomon G."/>
            <person name="Otstot J."/>
            <person name="Risinger J.I."/>
            <person name="Koonin E.V."/>
            <person name="Barrett J.C."/>
            <person name="Larionov V."/>
        </authorList>
    </citation>
    <scope>NUCLEOTIDE SEQUENCE [GENOMIC DNA]</scope>
</reference>
<reference key="2">
    <citation type="journal article" date="2005" name="Genome Res.">
        <title>Dynamic structure of the SPANX gene cluster mapped to the prostate cancer susceptibility locus HPCX at Xq27.</title>
        <authorList>
            <person name="Kouprina N."/>
            <person name="Pavlicek A."/>
            <person name="Noskov V.N."/>
            <person name="Solomon G."/>
            <person name="Otstot J."/>
            <person name="Isaacs W."/>
            <person name="Carpten J.D."/>
            <person name="Trent J.M."/>
            <person name="Schleutker J."/>
            <person name="Barrett J.C."/>
            <person name="Jurka J."/>
            <person name="Larionov V."/>
        </authorList>
    </citation>
    <scope>NUCLEOTIDE SEQUENCE [MRNA]</scope>
    <scope>VARIANT ILE-8</scope>
</reference>
<reference key="3">
    <citation type="journal article" date="2005" name="Nature">
        <title>The DNA sequence of the human X chromosome.</title>
        <authorList>
            <person name="Ross M.T."/>
            <person name="Grafham D.V."/>
            <person name="Coffey A.J."/>
            <person name="Scherer S."/>
            <person name="McLay K."/>
            <person name="Muzny D."/>
            <person name="Platzer M."/>
            <person name="Howell G.R."/>
            <person name="Burrows C."/>
            <person name="Bird C.P."/>
            <person name="Frankish A."/>
            <person name="Lovell F.L."/>
            <person name="Howe K.L."/>
            <person name="Ashurst J.L."/>
            <person name="Fulton R.S."/>
            <person name="Sudbrak R."/>
            <person name="Wen G."/>
            <person name="Jones M.C."/>
            <person name="Hurles M.E."/>
            <person name="Andrews T.D."/>
            <person name="Scott C.E."/>
            <person name="Searle S."/>
            <person name="Ramser J."/>
            <person name="Whittaker A."/>
            <person name="Deadman R."/>
            <person name="Carter N.P."/>
            <person name="Hunt S.E."/>
            <person name="Chen R."/>
            <person name="Cree A."/>
            <person name="Gunaratne P."/>
            <person name="Havlak P."/>
            <person name="Hodgson A."/>
            <person name="Metzker M.L."/>
            <person name="Richards S."/>
            <person name="Scott G."/>
            <person name="Steffen D."/>
            <person name="Sodergren E."/>
            <person name="Wheeler D.A."/>
            <person name="Worley K.C."/>
            <person name="Ainscough R."/>
            <person name="Ambrose K.D."/>
            <person name="Ansari-Lari M.A."/>
            <person name="Aradhya S."/>
            <person name="Ashwell R.I."/>
            <person name="Babbage A.K."/>
            <person name="Bagguley C.L."/>
            <person name="Ballabio A."/>
            <person name="Banerjee R."/>
            <person name="Barker G.E."/>
            <person name="Barlow K.F."/>
            <person name="Barrett I.P."/>
            <person name="Bates K.N."/>
            <person name="Beare D.M."/>
            <person name="Beasley H."/>
            <person name="Beasley O."/>
            <person name="Beck A."/>
            <person name="Bethel G."/>
            <person name="Blechschmidt K."/>
            <person name="Brady N."/>
            <person name="Bray-Allen S."/>
            <person name="Bridgeman A.M."/>
            <person name="Brown A.J."/>
            <person name="Brown M.J."/>
            <person name="Bonnin D."/>
            <person name="Bruford E.A."/>
            <person name="Buhay C."/>
            <person name="Burch P."/>
            <person name="Burford D."/>
            <person name="Burgess J."/>
            <person name="Burrill W."/>
            <person name="Burton J."/>
            <person name="Bye J.M."/>
            <person name="Carder C."/>
            <person name="Carrel L."/>
            <person name="Chako J."/>
            <person name="Chapman J.C."/>
            <person name="Chavez D."/>
            <person name="Chen E."/>
            <person name="Chen G."/>
            <person name="Chen Y."/>
            <person name="Chen Z."/>
            <person name="Chinault C."/>
            <person name="Ciccodicola A."/>
            <person name="Clark S.Y."/>
            <person name="Clarke G."/>
            <person name="Clee C.M."/>
            <person name="Clegg S."/>
            <person name="Clerc-Blankenburg K."/>
            <person name="Clifford K."/>
            <person name="Cobley V."/>
            <person name="Cole C.G."/>
            <person name="Conquer J.S."/>
            <person name="Corby N."/>
            <person name="Connor R.E."/>
            <person name="David R."/>
            <person name="Davies J."/>
            <person name="Davis C."/>
            <person name="Davis J."/>
            <person name="Delgado O."/>
            <person name="Deshazo D."/>
            <person name="Dhami P."/>
            <person name="Ding Y."/>
            <person name="Dinh H."/>
            <person name="Dodsworth S."/>
            <person name="Draper H."/>
            <person name="Dugan-Rocha S."/>
            <person name="Dunham A."/>
            <person name="Dunn M."/>
            <person name="Durbin K.J."/>
            <person name="Dutta I."/>
            <person name="Eades T."/>
            <person name="Ellwood M."/>
            <person name="Emery-Cohen A."/>
            <person name="Errington H."/>
            <person name="Evans K.L."/>
            <person name="Faulkner L."/>
            <person name="Francis F."/>
            <person name="Frankland J."/>
            <person name="Fraser A.E."/>
            <person name="Galgoczy P."/>
            <person name="Gilbert J."/>
            <person name="Gill R."/>
            <person name="Gloeckner G."/>
            <person name="Gregory S.G."/>
            <person name="Gribble S."/>
            <person name="Griffiths C."/>
            <person name="Grocock R."/>
            <person name="Gu Y."/>
            <person name="Gwilliam R."/>
            <person name="Hamilton C."/>
            <person name="Hart E.A."/>
            <person name="Hawes A."/>
            <person name="Heath P.D."/>
            <person name="Heitmann K."/>
            <person name="Hennig S."/>
            <person name="Hernandez J."/>
            <person name="Hinzmann B."/>
            <person name="Ho S."/>
            <person name="Hoffs M."/>
            <person name="Howden P.J."/>
            <person name="Huckle E.J."/>
            <person name="Hume J."/>
            <person name="Hunt P.J."/>
            <person name="Hunt A.R."/>
            <person name="Isherwood J."/>
            <person name="Jacob L."/>
            <person name="Johnson D."/>
            <person name="Jones S."/>
            <person name="de Jong P.J."/>
            <person name="Joseph S.S."/>
            <person name="Keenan S."/>
            <person name="Kelly S."/>
            <person name="Kershaw J.K."/>
            <person name="Khan Z."/>
            <person name="Kioschis P."/>
            <person name="Klages S."/>
            <person name="Knights A.J."/>
            <person name="Kosiura A."/>
            <person name="Kovar-Smith C."/>
            <person name="Laird G.K."/>
            <person name="Langford C."/>
            <person name="Lawlor S."/>
            <person name="Leversha M."/>
            <person name="Lewis L."/>
            <person name="Liu W."/>
            <person name="Lloyd C."/>
            <person name="Lloyd D.M."/>
            <person name="Loulseged H."/>
            <person name="Loveland J.E."/>
            <person name="Lovell J.D."/>
            <person name="Lozado R."/>
            <person name="Lu J."/>
            <person name="Lyne R."/>
            <person name="Ma J."/>
            <person name="Maheshwari M."/>
            <person name="Matthews L.H."/>
            <person name="McDowall J."/>
            <person name="McLaren S."/>
            <person name="McMurray A."/>
            <person name="Meidl P."/>
            <person name="Meitinger T."/>
            <person name="Milne S."/>
            <person name="Miner G."/>
            <person name="Mistry S.L."/>
            <person name="Morgan M."/>
            <person name="Morris S."/>
            <person name="Mueller I."/>
            <person name="Mullikin J.C."/>
            <person name="Nguyen N."/>
            <person name="Nordsiek G."/>
            <person name="Nyakatura G."/>
            <person name="O'dell C.N."/>
            <person name="Okwuonu G."/>
            <person name="Palmer S."/>
            <person name="Pandian R."/>
            <person name="Parker D."/>
            <person name="Parrish J."/>
            <person name="Pasternak S."/>
            <person name="Patel D."/>
            <person name="Pearce A.V."/>
            <person name="Pearson D.M."/>
            <person name="Pelan S.E."/>
            <person name="Perez L."/>
            <person name="Porter K.M."/>
            <person name="Ramsey Y."/>
            <person name="Reichwald K."/>
            <person name="Rhodes S."/>
            <person name="Ridler K.A."/>
            <person name="Schlessinger D."/>
            <person name="Schueler M.G."/>
            <person name="Sehra H.K."/>
            <person name="Shaw-Smith C."/>
            <person name="Shen H."/>
            <person name="Sheridan E.M."/>
            <person name="Shownkeen R."/>
            <person name="Skuce C.D."/>
            <person name="Smith M.L."/>
            <person name="Sotheran E.C."/>
            <person name="Steingruber H.E."/>
            <person name="Steward C.A."/>
            <person name="Storey R."/>
            <person name="Swann R.M."/>
            <person name="Swarbreck D."/>
            <person name="Tabor P.E."/>
            <person name="Taudien S."/>
            <person name="Taylor T."/>
            <person name="Teague B."/>
            <person name="Thomas K."/>
            <person name="Thorpe A."/>
            <person name="Timms K."/>
            <person name="Tracey A."/>
            <person name="Trevanion S."/>
            <person name="Tromans A.C."/>
            <person name="d'Urso M."/>
            <person name="Verduzco D."/>
            <person name="Villasana D."/>
            <person name="Waldron L."/>
            <person name="Wall M."/>
            <person name="Wang Q."/>
            <person name="Warren J."/>
            <person name="Warry G.L."/>
            <person name="Wei X."/>
            <person name="West A."/>
            <person name="Whitehead S.L."/>
            <person name="Whiteley M.N."/>
            <person name="Wilkinson J.E."/>
            <person name="Willey D.L."/>
            <person name="Williams G."/>
            <person name="Williams L."/>
            <person name="Williamson A."/>
            <person name="Williamson H."/>
            <person name="Wilming L."/>
            <person name="Woodmansey R.L."/>
            <person name="Wray P.W."/>
            <person name="Yen J."/>
            <person name="Zhang J."/>
            <person name="Zhou J."/>
            <person name="Zoghbi H."/>
            <person name="Zorilla S."/>
            <person name="Buck D."/>
            <person name="Reinhardt R."/>
            <person name="Poustka A."/>
            <person name="Rosenthal A."/>
            <person name="Lehrach H."/>
            <person name="Meindl A."/>
            <person name="Minx P.J."/>
            <person name="Hillier L.W."/>
            <person name="Willard H.F."/>
            <person name="Wilson R.K."/>
            <person name="Waterston R.H."/>
            <person name="Rice C.M."/>
            <person name="Vaudin M."/>
            <person name="Coulson A."/>
            <person name="Nelson D.L."/>
            <person name="Weinstock G."/>
            <person name="Sulston J.E."/>
            <person name="Durbin R.M."/>
            <person name="Hubbard T."/>
            <person name="Gibbs R.A."/>
            <person name="Beck S."/>
            <person name="Rogers J."/>
            <person name="Bentley D.R."/>
        </authorList>
    </citation>
    <scope>NUCLEOTIDE SEQUENCE [LARGE SCALE GENOMIC DNA]</scope>
</reference>
<name>SPXN2_HUMAN</name>
<keyword id="KW-1185">Reference proteome</keyword>
<comment type="interaction">
    <interactant intactId="EBI-12023934">
        <id>Q5MJ10</id>
    </interactant>
    <interactant intactId="EBI-5653378">
        <id>Q15327</id>
        <label>ANKRD1</label>
    </interactant>
    <organismsDiffer>false</organismsDiffer>
    <experiments>3</experiments>
</comment>
<comment type="interaction">
    <interactant intactId="EBI-12023934">
        <id>Q5MJ10</id>
    </interactant>
    <interactant intactId="EBI-17183751">
        <id>X5D778</id>
        <label>ANKRD11</label>
    </interactant>
    <organismsDiffer>false</organismsDiffer>
    <experiments>3</experiments>
</comment>
<comment type="interaction">
    <interactant intactId="EBI-12023934">
        <id>Q5MJ10</id>
    </interactant>
    <interactant intactId="EBI-11524452">
        <id>Q8N9N5-2</id>
        <label>BANP</label>
    </interactant>
    <organismsDiffer>false</organismsDiffer>
    <experiments>3</experiments>
</comment>
<comment type="interaction">
    <interactant intactId="EBI-12023934">
        <id>Q5MJ10</id>
    </interactant>
    <interactant intactId="EBI-10181188">
        <id>Q8N7W2-2</id>
        <label>BEND7</label>
    </interactant>
    <organismsDiffer>false</organismsDiffer>
    <experiments>3</experiments>
</comment>
<comment type="interaction">
    <interactant intactId="EBI-12023934">
        <id>Q5MJ10</id>
    </interactant>
    <interactant intactId="EBI-12191873">
        <id>Q86UB2</id>
        <label>BIVM</label>
    </interactant>
    <organismsDiffer>false</organismsDiffer>
    <experiments>5</experiments>
</comment>
<comment type="interaction">
    <interactant intactId="EBI-12023934">
        <id>Q5MJ10</id>
    </interactant>
    <interactant intactId="EBI-2559016">
        <id>Q6NZI2</id>
        <label>CAVIN1</label>
    </interactant>
    <organismsDiffer>false</organismsDiffer>
    <experiments>4</experiments>
</comment>
<comment type="interaction">
    <interactant intactId="EBI-12023934">
        <id>Q5MJ10</id>
    </interactant>
    <interactant intactId="EBI-970231">
        <id>O60729</id>
        <label>CDC14B</label>
    </interactant>
    <organismsDiffer>false</organismsDiffer>
    <experiments>3</experiments>
</comment>
<comment type="interaction">
    <interactant intactId="EBI-12023934">
        <id>Q5MJ10</id>
    </interactant>
    <interactant intactId="EBI-979174">
        <id>Q53HL2</id>
        <label>CDCA8</label>
    </interactant>
    <organismsDiffer>false</organismsDiffer>
    <experiments>3</experiments>
</comment>
<comment type="interaction">
    <interactant intactId="EBI-12023934">
        <id>Q5MJ10</id>
    </interactant>
    <interactant intactId="EBI-8467076">
        <id>Q8N8U2</id>
        <label>CDYL2</label>
    </interactant>
    <organismsDiffer>false</organismsDiffer>
    <experiments>3</experiments>
</comment>
<comment type="interaction">
    <interactant intactId="EBI-12023934">
        <id>Q5MJ10</id>
    </interactant>
    <interactant intactId="EBI-945751">
        <id>P38432</id>
        <label>COIL</label>
    </interactant>
    <organismsDiffer>false</organismsDiffer>
    <experiments>3</experiments>
</comment>
<comment type="interaction">
    <interactant intactId="EBI-12023934">
        <id>Q5MJ10</id>
    </interactant>
    <interactant intactId="EBI-710457">
        <id>Q7L190</id>
        <label>DPPA4</label>
    </interactant>
    <organismsDiffer>false</organismsDiffer>
    <experiments>3</experiments>
</comment>
<comment type="interaction">
    <interactant intactId="EBI-12023934">
        <id>Q5MJ10</id>
    </interactant>
    <interactant intactId="EBI-11100740">
        <id>Q9Y2J2-2</id>
        <label>EPB41L3</label>
    </interactant>
    <organismsDiffer>false</organismsDiffer>
    <experiments>3</experiments>
</comment>
<comment type="interaction">
    <interactant intactId="EBI-12023934">
        <id>Q5MJ10</id>
    </interactant>
    <interactant intactId="EBI-741770">
        <id>Q96PV7</id>
        <label>FAM193B</label>
    </interactant>
    <organismsDiffer>false</organismsDiffer>
    <experiments>3</experiments>
</comment>
<comment type="interaction">
    <interactant intactId="EBI-12023934">
        <id>Q5MJ10</id>
    </interactant>
    <interactant intactId="EBI-8465160">
        <id>Q9H8W3</id>
        <label>FAM204A</label>
    </interactant>
    <organismsDiffer>false</organismsDiffer>
    <experiments>3</experiments>
</comment>
<comment type="interaction">
    <interactant intactId="EBI-12023934">
        <id>Q5MJ10</id>
    </interactant>
    <interactant intactId="EBI-11519926">
        <id>Q6PI77</id>
        <label>GPRASP3</label>
    </interactant>
    <organismsDiffer>false</organismsDiffer>
    <experiments>3</experiments>
</comment>
<comment type="interaction">
    <interactant intactId="EBI-12023934">
        <id>Q5MJ10</id>
    </interactant>
    <interactant intactId="EBI-12142839">
        <id>U3KQK0</id>
        <label>H2BC15</label>
    </interactant>
    <organismsDiffer>false</organismsDiffer>
    <experiments>3</experiments>
</comment>
<comment type="interaction">
    <interactant intactId="EBI-12023934">
        <id>Q5MJ10</id>
    </interactant>
    <interactant intactId="EBI-9089060">
        <id>Q7Z7F0-4</id>
        <label>KHDC4</label>
    </interactant>
    <organismsDiffer>false</organismsDiffer>
    <experiments>3</experiments>
</comment>
<comment type="interaction">
    <interactant intactId="EBI-12023934">
        <id>Q5MJ10</id>
    </interactant>
    <interactant intactId="EBI-2805442">
        <id>Q9NPI7</id>
        <label>KRCC1</label>
    </interactant>
    <organismsDiffer>false</organismsDiffer>
    <experiments>3</experiments>
</comment>
<comment type="interaction">
    <interactant intactId="EBI-12023934">
        <id>Q5MJ10</id>
    </interactant>
    <interactant intactId="EBI-11985629">
        <id>Q96JM7-2</id>
        <label>L3MBTL3</label>
    </interactant>
    <organismsDiffer>false</organismsDiffer>
    <experiments>3</experiments>
</comment>
<comment type="interaction">
    <interactant intactId="EBI-12023934">
        <id>Q5MJ10</id>
    </interactant>
    <interactant intactId="EBI-16439278">
        <id>Q6FHY5</id>
        <label>MEOX2</label>
    </interactant>
    <organismsDiffer>false</organismsDiffer>
    <experiments>3</experiments>
</comment>
<comment type="interaction">
    <interactant intactId="EBI-12023934">
        <id>Q5MJ10</id>
    </interactant>
    <interactant intactId="EBI-3923617">
        <id>Q9H2K0</id>
        <label>MTIF3</label>
    </interactant>
    <organismsDiffer>false</organismsDiffer>
    <experiments>3</experiments>
</comment>
<comment type="interaction">
    <interactant intactId="EBI-12023934">
        <id>Q5MJ10</id>
    </interactant>
    <interactant intactId="EBI-716098">
        <id>Q9UGY1</id>
        <label>NOL12</label>
    </interactant>
    <organismsDiffer>false</organismsDiffer>
    <experiments>3</experiments>
</comment>
<comment type="interaction">
    <interactant intactId="EBI-12023934">
        <id>Q5MJ10</id>
    </interactant>
    <interactant intactId="EBI-10302990">
        <id>Q9BYU1</id>
        <label>PBX4</label>
    </interactant>
    <organismsDiffer>false</organismsDiffer>
    <experiments>3</experiments>
</comment>
<comment type="interaction">
    <interactant intactId="EBI-12023934">
        <id>Q5MJ10</id>
    </interactant>
    <interactant intactId="EBI-79165">
        <id>Q9NRD5</id>
        <label>PICK1</label>
    </interactant>
    <organismsDiffer>false</organismsDiffer>
    <experiments>3</experiments>
</comment>
<comment type="interaction">
    <interactant intactId="EBI-12023934">
        <id>Q5MJ10</id>
    </interactant>
    <interactant intactId="EBI-2880285">
        <id>P56182</id>
        <label>RRP1</label>
    </interactant>
    <organismsDiffer>false</organismsDiffer>
    <experiments>3</experiments>
</comment>
<comment type="interaction">
    <interactant intactId="EBI-12023934">
        <id>Q5MJ10</id>
    </interactant>
    <interactant intactId="EBI-747398">
        <id>Q9UHJ3</id>
        <label>SFMBT1</label>
    </interactant>
    <organismsDiffer>false</organismsDiffer>
    <experiments>3</experiments>
</comment>
<comment type="interaction">
    <interactant intactId="EBI-12023934">
        <id>Q5MJ10</id>
    </interactant>
    <interactant intactId="EBI-395421">
        <id>Q16637</id>
        <label>SMN2</label>
    </interactant>
    <organismsDiffer>false</organismsDiffer>
    <experiments>3</experiments>
</comment>
<comment type="interaction">
    <interactant intactId="EBI-12023934">
        <id>Q5MJ10</id>
    </interactant>
    <interactant intactId="EBI-749336">
        <id>Q8TAD8</id>
        <label>SNIP1</label>
    </interactant>
    <organismsDiffer>false</organismsDiffer>
    <experiments>3</experiments>
</comment>
<comment type="interaction">
    <interactant intactId="EBI-12023934">
        <id>Q5MJ10</id>
    </interactant>
    <interactant intactId="EBI-297993">
        <id>P62316</id>
        <label>SNRPD2</label>
    </interactant>
    <organismsDiffer>false</organismsDiffer>
    <experiments>3</experiments>
</comment>
<comment type="interaction">
    <interactant intactId="EBI-12023934">
        <id>Q5MJ10</id>
    </interactant>
    <interactant intactId="EBI-348158">
        <id>Q02447</id>
        <label>SP3</label>
    </interactant>
    <organismsDiffer>false</organismsDiffer>
    <experiments>3</experiments>
</comment>
<comment type="interaction">
    <interactant intactId="EBI-12023934">
        <id>Q5MJ10</id>
    </interactant>
    <interactant intactId="EBI-10198587">
        <id>Q02446</id>
        <label>SP4</label>
    </interactant>
    <organismsDiffer>false</organismsDiffer>
    <experiments>3</experiments>
</comment>
<comment type="interaction">
    <interactant intactId="EBI-12023934">
        <id>Q5MJ10</id>
    </interactant>
    <interactant intactId="EBI-353399">
        <id>P37108</id>
        <label>SRP14</label>
    </interactant>
    <organismsDiffer>false</organismsDiffer>
    <experiments>3</experiments>
</comment>
<comment type="interaction">
    <interactant intactId="EBI-12023934">
        <id>Q5MJ10</id>
    </interactant>
    <interactant intactId="EBI-745680">
        <id>Q96MF2</id>
        <label>STAC3</label>
    </interactant>
    <organismsDiffer>false</organismsDiffer>
    <experiments>3</experiments>
</comment>
<comment type="interaction">
    <interactant intactId="EBI-12023934">
        <id>Q5MJ10</id>
    </interactant>
    <interactant intactId="EBI-747142">
        <id>Q96C24</id>
        <label>SYTL4</label>
    </interactant>
    <organismsDiffer>false</organismsDiffer>
    <experiments>3</experiments>
</comment>
<comment type="interaction">
    <interactant intactId="EBI-12023934">
        <id>Q5MJ10</id>
    </interactant>
    <interactant intactId="EBI-741515">
        <id>Q9NVV9</id>
        <label>THAP1</label>
    </interactant>
    <organismsDiffer>false</organismsDiffer>
    <experiments>3</experiments>
</comment>
<comment type="interaction">
    <interactant intactId="EBI-12023934">
        <id>Q5MJ10</id>
    </interactant>
    <interactant intactId="EBI-746692">
        <id>P19237</id>
        <label>TNNI1</label>
    </interactant>
    <organismsDiffer>false</organismsDiffer>
    <experiments>3</experiments>
</comment>
<comment type="interaction">
    <interactant intactId="EBI-12023934">
        <id>Q5MJ10</id>
    </interactant>
    <interactant intactId="EBI-12227803">
        <id>Q5SQQ9-2</id>
        <label>VAX1</label>
    </interactant>
    <organismsDiffer>false</organismsDiffer>
    <experiments>3</experiments>
</comment>
<comment type="interaction">
    <interactant intactId="EBI-12023934">
        <id>Q5MJ10</id>
    </interactant>
    <interactant intactId="EBI-12111538">
        <id>Q8IY57-5</id>
        <label>YAF2</label>
    </interactant>
    <organismsDiffer>false</organismsDiffer>
    <experiments>3</experiments>
</comment>
<comment type="interaction">
    <interactant intactId="EBI-12023934">
        <id>Q5MJ10</id>
    </interactant>
    <interactant intactId="EBI-744864">
        <id>P10074</id>
        <label>ZBTB48</label>
    </interactant>
    <organismsDiffer>false</organismsDiffer>
    <experiments>3</experiments>
</comment>
<comment type="interaction">
    <interactant intactId="EBI-12023934">
        <id>Q5MJ10</id>
    </interactant>
    <interactant intactId="EBI-12884200">
        <id>P17023</id>
        <label>ZNF19</label>
    </interactant>
    <organismsDiffer>false</organismsDiffer>
    <experiments>3</experiments>
</comment>
<comment type="interaction">
    <interactant intactId="EBI-12023934">
        <id>Q5MJ10</id>
    </interactant>
    <interactant intactId="EBI-8489229">
        <id>Q9BSG1</id>
        <label>ZNF2</label>
    </interactant>
    <organismsDiffer>false</organismsDiffer>
    <experiments>3</experiments>
</comment>
<comment type="interaction">
    <interactant intactId="EBI-12023934">
        <id>Q5MJ10</id>
    </interactant>
    <interactant intactId="EBI-11962468">
        <id>Q7Z4V0</id>
        <label>ZNF438</label>
    </interactant>
    <organismsDiffer>false</organismsDiffer>
    <experiments>3</experiments>
</comment>
<comment type="interaction">
    <interactant intactId="EBI-12023934">
        <id>Q5MJ10</id>
    </interactant>
    <interactant intactId="EBI-11035148">
        <id>Q8TF50</id>
        <label>ZNF526</label>
    </interactant>
    <organismsDiffer>false</organismsDiffer>
    <experiments>3</experiments>
</comment>
<comment type="interaction">
    <interactant intactId="EBI-12023934">
        <id>Q5MJ10</id>
    </interactant>
    <interactant intactId="EBI-625509">
        <id>Q8N720</id>
        <label>ZNF655</label>
    </interactant>
    <organismsDiffer>false</organismsDiffer>
    <experiments>3</experiments>
</comment>
<comment type="interaction">
    <interactant intactId="EBI-12023934">
        <id>Q5MJ10</id>
    </interactant>
    <interactant intactId="EBI-21734356">
        <id>Q96N20</id>
        <label>ZNF75A</label>
    </interactant>
    <organismsDiffer>false</organismsDiffer>
    <experiments>3</experiments>
</comment>
<comment type="interaction">
    <interactant intactId="EBI-12023934">
        <id>Q5MJ10</id>
    </interactant>
    <interactant intactId="EBI-2849074">
        <id>P51523</id>
        <label>ZNF84</label>
    </interactant>
    <organismsDiffer>false</organismsDiffer>
    <experiments>3</experiments>
</comment>
<comment type="similarity">
    <text evidence="3">Belongs to the SPAN-X family.</text>
</comment>
<sequence length="180" mass="19917">MEQPTSSTNGEKRKSPCESNNKKNDEMQEAPNRVLAPKQSLQKTKTIEYLTIIVYYYRKHTKINSNQLEKDQSRENSINPVQEEEDEGLDSAEGSSQEDEDLDSSEGSSQEDEDLDSSEGSSQEDEDLDSSEGSSQEDEDLDSSEGSSQEDEDLDPPEGSSQEDEDLDSSEGSSQEGGED</sequence>
<gene>
    <name type="primary">SPANXN2</name>
</gene>
<evidence type="ECO:0000256" key="1">
    <source>
        <dbReference type="SAM" id="MobiDB-lite"/>
    </source>
</evidence>
<evidence type="ECO:0000269" key="2">
    <source>
    </source>
</evidence>
<evidence type="ECO:0000305" key="3"/>
<accession>Q5MJ10</accession>
<accession>Q0ZNM2</accession>
<organism>
    <name type="scientific">Homo sapiens</name>
    <name type="common">Human</name>
    <dbReference type="NCBI Taxonomy" id="9606"/>
    <lineage>
        <taxon>Eukaryota</taxon>
        <taxon>Metazoa</taxon>
        <taxon>Chordata</taxon>
        <taxon>Craniata</taxon>
        <taxon>Vertebrata</taxon>
        <taxon>Euteleostomi</taxon>
        <taxon>Mammalia</taxon>
        <taxon>Eutheria</taxon>
        <taxon>Euarchontoglires</taxon>
        <taxon>Primates</taxon>
        <taxon>Haplorrhini</taxon>
        <taxon>Catarrhini</taxon>
        <taxon>Hominidae</taxon>
        <taxon>Homo</taxon>
    </lineage>
</organism>
<proteinExistence type="evidence at protein level"/>
<protein>
    <recommendedName>
        <fullName>Sperm protein associated with the nucleus on the X chromosome N2</fullName>
    </recommendedName>
    <alternativeName>
        <fullName>Nuclear-associated protein SPAN-Xn2</fullName>
        <shortName>SPANX-N2</shortName>
    </alternativeName>
    <alternativeName>
        <fullName>SPANX family member N2</fullName>
    </alternativeName>
</protein>
<feature type="chain" id="PRO_0000285539" description="Sperm protein associated with the nucleus on the X chromosome N2">
    <location>
        <begin position="1"/>
        <end position="180"/>
    </location>
</feature>
<feature type="region of interest" description="Disordered" evidence="1">
    <location>
        <begin position="1"/>
        <end position="46"/>
    </location>
</feature>
<feature type="region of interest" description="Disordered" evidence="1">
    <location>
        <begin position="64"/>
        <end position="180"/>
    </location>
</feature>
<feature type="compositionally biased region" description="Basic and acidic residues" evidence="1">
    <location>
        <begin position="10"/>
        <end position="26"/>
    </location>
</feature>
<feature type="compositionally biased region" description="Acidic residues" evidence="1">
    <location>
        <begin position="82"/>
        <end position="169"/>
    </location>
</feature>
<feature type="compositionally biased region" description="Low complexity" evidence="1">
    <location>
        <begin position="170"/>
        <end position="180"/>
    </location>
</feature>
<feature type="sequence variant" id="VAR_032025" description="In dbSNP:rs79543398." evidence="2">
    <original>T</original>
    <variation>I</variation>
    <location>
        <position position="8"/>
    </location>
</feature>